<dbReference type="EC" id="2.7.4.6" evidence="1"/>
<dbReference type="EMBL" id="CP000563">
    <property type="protein sequence ID" value="ABN61882.1"/>
    <property type="molecule type" value="Genomic_DNA"/>
</dbReference>
<dbReference type="RefSeq" id="WP_006081848.1">
    <property type="nucleotide sequence ID" value="NC_009052.1"/>
</dbReference>
<dbReference type="SMR" id="A3D569"/>
<dbReference type="STRING" id="325240.Sbal_2389"/>
<dbReference type="GeneID" id="11774803"/>
<dbReference type="KEGG" id="sbl:Sbal_2389"/>
<dbReference type="HOGENOM" id="CLU_060216_8_1_6"/>
<dbReference type="OrthoDB" id="9801161at2"/>
<dbReference type="Proteomes" id="UP000001557">
    <property type="component" value="Chromosome"/>
</dbReference>
<dbReference type="GO" id="GO:0005737">
    <property type="term" value="C:cytoplasm"/>
    <property type="evidence" value="ECO:0007669"/>
    <property type="project" value="UniProtKB-SubCell"/>
</dbReference>
<dbReference type="GO" id="GO:0005524">
    <property type="term" value="F:ATP binding"/>
    <property type="evidence" value="ECO:0007669"/>
    <property type="project" value="UniProtKB-UniRule"/>
</dbReference>
<dbReference type="GO" id="GO:0046872">
    <property type="term" value="F:metal ion binding"/>
    <property type="evidence" value="ECO:0007669"/>
    <property type="project" value="UniProtKB-KW"/>
</dbReference>
<dbReference type="GO" id="GO:0004550">
    <property type="term" value="F:nucleoside diphosphate kinase activity"/>
    <property type="evidence" value="ECO:0007669"/>
    <property type="project" value="UniProtKB-UniRule"/>
</dbReference>
<dbReference type="GO" id="GO:0006241">
    <property type="term" value="P:CTP biosynthetic process"/>
    <property type="evidence" value="ECO:0007669"/>
    <property type="project" value="UniProtKB-UniRule"/>
</dbReference>
<dbReference type="GO" id="GO:0006183">
    <property type="term" value="P:GTP biosynthetic process"/>
    <property type="evidence" value="ECO:0007669"/>
    <property type="project" value="UniProtKB-UniRule"/>
</dbReference>
<dbReference type="GO" id="GO:0006228">
    <property type="term" value="P:UTP biosynthetic process"/>
    <property type="evidence" value="ECO:0007669"/>
    <property type="project" value="UniProtKB-UniRule"/>
</dbReference>
<dbReference type="CDD" id="cd04413">
    <property type="entry name" value="NDPk_I"/>
    <property type="match status" value="1"/>
</dbReference>
<dbReference type="FunFam" id="3.30.70.141:FF:000001">
    <property type="entry name" value="Nucleoside diphosphate kinase"/>
    <property type="match status" value="1"/>
</dbReference>
<dbReference type="Gene3D" id="3.30.70.141">
    <property type="entry name" value="Nucleoside diphosphate kinase-like domain"/>
    <property type="match status" value="1"/>
</dbReference>
<dbReference type="HAMAP" id="MF_00451">
    <property type="entry name" value="NDP_kinase"/>
    <property type="match status" value="1"/>
</dbReference>
<dbReference type="InterPro" id="IPR034907">
    <property type="entry name" value="NDK-like_dom"/>
</dbReference>
<dbReference type="InterPro" id="IPR036850">
    <property type="entry name" value="NDK-like_dom_sf"/>
</dbReference>
<dbReference type="InterPro" id="IPR001564">
    <property type="entry name" value="Nucleoside_diP_kinase"/>
</dbReference>
<dbReference type="InterPro" id="IPR023005">
    <property type="entry name" value="Nucleoside_diP_kinase_AS"/>
</dbReference>
<dbReference type="NCBIfam" id="NF001908">
    <property type="entry name" value="PRK00668.1"/>
    <property type="match status" value="1"/>
</dbReference>
<dbReference type="PANTHER" id="PTHR46161">
    <property type="entry name" value="NUCLEOSIDE DIPHOSPHATE KINASE"/>
    <property type="match status" value="1"/>
</dbReference>
<dbReference type="PANTHER" id="PTHR46161:SF3">
    <property type="entry name" value="NUCLEOSIDE DIPHOSPHATE KINASE DDB_G0292928-RELATED"/>
    <property type="match status" value="1"/>
</dbReference>
<dbReference type="Pfam" id="PF00334">
    <property type="entry name" value="NDK"/>
    <property type="match status" value="1"/>
</dbReference>
<dbReference type="PRINTS" id="PR01243">
    <property type="entry name" value="NUCDPKINASE"/>
</dbReference>
<dbReference type="SMART" id="SM00562">
    <property type="entry name" value="NDK"/>
    <property type="match status" value="1"/>
</dbReference>
<dbReference type="SUPFAM" id="SSF54919">
    <property type="entry name" value="Nucleoside diphosphate kinase, NDK"/>
    <property type="match status" value="1"/>
</dbReference>
<dbReference type="PROSITE" id="PS00469">
    <property type="entry name" value="NDPK"/>
    <property type="match status" value="1"/>
</dbReference>
<dbReference type="PROSITE" id="PS51374">
    <property type="entry name" value="NDPK_LIKE"/>
    <property type="match status" value="1"/>
</dbReference>
<comment type="function">
    <text evidence="1">Major role in the synthesis of nucleoside triphosphates other than ATP. The ATP gamma phosphate is transferred to the NDP beta phosphate via a ping-pong mechanism, using a phosphorylated active-site intermediate.</text>
</comment>
<comment type="catalytic activity">
    <reaction evidence="1">
        <text>a 2'-deoxyribonucleoside 5'-diphosphate + ATP = a 2'-deoxyribonucleoside 5'-triphosphate + ADP</text>
        <dbReference type="Rhea" id="RHEA:44640"/>
        <dbReference type="ChEBI" id="CHEBI:30616"/>
        <dbReference type="ChEBI" id="CHEBI:61560"/>
        <dbReference type="ChEBI" id="CHEBI:73316"/>
        <dbReference type="ChEBI" id="CHEBI:456216"/>
        <dbReference type="EC" id="2.7.4.6"/>
    </reaction>
</comment>
<comment type="catalytic activity">
    <reaction evidence="1">
        <text>a ribonucleoside 5'-diphosphate + ATP = a ribonucleoside 5'-triphosphate + ADP</text>
        <dbReference type="Rhea" id="RHEA:18113"/>
        <dbReference type="ChEBI" id="CHEBI:30616"/>
        <dbReference type="ChEBI" id="CHEBI:57930"/>
        <dbReference type="ChEBI" id="CHEBI:61557"/>
        <dbReference type="ChEBI" id="CHEBI:456216"/>
        <dbReference type="EC" id="2.7.4.6"/>
    </reaction>
</comment>
<comment type="cofactor">
    <cofactor evidence="1">
        <name>Mg(2+)</name>
        <dbReference type="ChEBI" id="CHEBI:18420"/>
    </cofactor>
</comment>
<comment type="subunit">
    <text evidence="1">Homotetramer.</text>
</comment>
<comment type="subcellular location">
    <subcellularLocation>
        <location evidence="1">Cytoplasm</location>
    </subcellularLocation>
</comment>
<comment type="similarity">
    <text evidence="1">Belongs to the NDK family.</text>
</comment>
<organism>
    <name type="scientific">Shewanella baltica (strain OS155 / ATCC BAA-1091)</name>
    <dbReference type="NCBI Taxonomy" id="325240"/>
    <lineage>
        <taxon>Bacteria</taxon>
        <taxon>Pseudomonadati</taxon>
        <taxon>Pseudomonadota</taxon>
        <taxon>Gammaproteobacteria</taxon>
        <taxon>Alteromonadales</taxon>
        <taxon>Shewanellaceae</taxon>
        <taxon>Shewanella</taxon>
    </lineage>
</organism>
<evidence type="ECO:0000255" key="1">
    <source>
        <dbReference type="HAMAP-Rule" id="MF_00451"/>
    </source>
</evidence>
<reference key="1">
    <citation type="submission" date="2007-02" db="EMBL/GenBank/DDBJ databases">
        <title>Complete sequence of chromosome of Shewanella baltica OS155.</title>
        <authorList>
            <consortium name="US DOE Joint Genome Institute"/>
            <person name="Copeland A."/>
            <person name="Lucas S."/>
            <person name="Lapidus A."/>
            <person name="Barry K."/>
            <person name="Detter J.C."/>
            <person name="Glavina del Rio T."/>
            <person name="Hammon N."/>
            <person name="Israni S."/>
            <person name="Dalin E."/>
            <person name="Tice H."/>
            <person name="Pitluck S."/>
            <person name="Sims D.R."/>
            <person name="Brettin T."/>
            <person name="Bruce D."/>
            <person name="Han C."/>
            <person name="Tapia R."/>
            <person name="Brainard J."/>
            <person name="Schmutz J."/>
            <person name="Larimer F."/>
            <person name="Land M."/>
            <person name="Hauser L."/>
            <person name="Kyrpides N."/>
            <person name="Mikhailova N."/>
            <person name="Brettar I."/>
            <person name="Klappenbach J."/>
            <person name="Konstantinidis K."/>
            <person name="Rodrigues J."/>
            <person name="Tiedje J."/>
            <person name="Richardson P."/>
        </authorList>
    </citation>
    <scope>NUCLEOTIDE SEQUENCE [LARGE SCALE GENOMIC DNA]</scope>
    <source>
        <strain>OS155 / ATCC BAA-1091</strain>
    </source>
</reference>
<gene>
    <name evidence="1" type="primary">ndk</name>
    <name type="ordered locus">Sbal_2389</name>
</gene>
<accession>A3D569</accession>
<feature type="chain" id="PRO_1000026292" description="Nucleoside diphosphate kinase">
    <location>
        <begin position="1"/>
        <end position="143"/>
    </location>
</feature>
<feature type="active site" description="Pros-phosphohistidine intermediate" evidence="1">
    <location>
        <position position="117"/>
    </location>
</feature>
<feature type="binding site" evidence="1">
    <location>
        <position position="11"/>
    </location>
    <ligand>
        <name>ATP</name>
        <dbReference type="ChEBI" id="CHEBI:30616"/>
    </ligand>
</feature>
<feature type="binding site" evidence="1">
    <location>
        <position position="59"/>
    </location>
    <ligand>
        <name>ATP</name>
        <dbReference type="ChEBI" id="CHEBI:30616"/>
    </ligand>
</feature>
<feature type="binding site" evidence="1">
    <location>
        <position position="87"/>
    </location>
    <ligand>
        <name>ATP</name>
        <dbReference type="ChEBI" id="CHEBI:30616"/>
    </ligand>
</feature>
<feature type="binding site" evidence="1">
    <location>
        <position position="93"/>
    </location>
    <ligand>
        <name>ATP</name>
        <dbReference type="ChEBI" id="CHEBI:30616"/>
    </ligand>
</feature>
<feature type="binding site" evidence="1">
    <location>
        <position position="104"/>
    </location>
    <ligand>
        <name>ATP</name>
        <dbReference type="ChEBI" id="CHEBI:30616"/>
    </ligand>
</feature>
<feature type="binding site" evidence="1">
    <location>
        <position position="114"/>
    </location>
    <ligand>
        <name>ATP</name>
        <dbReference type="ChEBI" id="CHEBI:30616"/>
    </ligand>
</feature>
<name>NDK_SHEB5</name>
<protein>
    <recommendedName>
        <fullName evidence="1">Nucleoside diphosphate kinase</fullName>
        <shortName evidence="1">NDK</shortName>
        <shortName evidence="1">NDP kinase</shortName>
        <ecNumber evidence="1">2.7.4.6</ecNumber>
    </recommendedName>
    <alternativeName>
        <fullName evidence="1">Nucleoside-2-P kinase</fullName>
    </alternativeName>
</protein>
<proteinExistence type="inferred from homology"/>
<keyword id="KW-0067">ATP-binding</keyword>
<keyword id="KW-0963">Cytoplasm</keyword>
<keyword id="KW-0418">Kinase</keyword>
<keyword id="KW-0460">Magnesium</keyword>
<keyword id="KW-0479">Metal-binding</keyword>
<keyword id="KW-0546">Nucleotide metabolism</keyword>
<keyword id="KW-0547">Nucleotide-binding</keyword>
<keyword id="KW-0597">Phosphoprotein</keyword>
<keyword id="KW-1185">Reference proteome</keyword>
<keyword id="KW-0808">Transferase</keyword>
<sequence length="143" mass="15470">MAIERTFSIIKPDAVAKNHIGAIYNRFETAGLKIVASKMLHLTKEQAEGFYAEHSERGFFGALVAFMTSGPIMVQVLEGENAVLAHREILGATNPAQAAPGTIRADFAESIDENAAHGSDAVESAAREIAYFFSAEELCPRTR</sequence>